<feature type="chain" id="PRO_0000047650" description="Zinc finger protein 561">
    <location>
        <begin position="1"/>
        <end position="486"/>
    </location>
</feature>
<feature type="domain" description="KRAB" evidence="2">
    <location>
        <begin position="41"/>
        <end position="112"/>
    </location>
</feature>
<feature type="zinc finger region" description="C2H2-type 1; degenerate" evidence="1">
    <location>
        <begin position="118"/>
        <end position="140"/>
    </location>
</feature>
<feature type="zinc finger region" description="C2H2-type 2; degenerate" evidence="1">
    <location>
        <begin position="169"/>
        <end position="191"/>
    </location>
</feature>
<feature type="zinc finger region" description="C2H2-type 3" evidence="1">
    <location>
        <begin position="197"/>
        <end position="219"/>
    </location>
</feature>
<feature type="zinc finger region" description="C2H2-type 4; degenerate" evidence="1">
    <location>
        <begin position="223"/>
        <end position="247"/>
    </location>
</feature>
<feature type="zinc finger region" description="C2H2-type 5; degenerate" evidence="1">
    <location>
        <begin position="253"/>
        <end position="275"/>
    </location>
</feature>
<feature type="zinc finger region" description="C2H2-type 6" evidence="1">
    <location>
        <begin position="281"/>
        <end position="303"/>
    </location>
</feature>
<feature type="zinc finger region" description="C2H2-type 7" evidence="1">
    <location>
        <begin position="309"/>
        <end position="331"/>
    </location>
</feature>
<feature type="zinc finger region" description="C2H2-type 8" evidence="1">
    <location>
        <begin position="337"/>
        <end position="359"/>
    </location>
</feature>
<feature type="zinc finger region" description="C2H2-type 9" evidence="1">
    <location>
        <begin position="365"/>
        <end position="387"/>
    </location>
</feature>
<feature type="zinc finger region" description="C2H2-type 10" evidence="1">
    <location>
        <begin position="393"/>
        <end position="415"/>
    </location>
</feature>
<feature type="zinc finger region" description="C2H2-type 11" evidence="1">
    <location>
        <begin position="421"/>
        <end position="443"/>
    </location>
</feature>
<feature type="zinc finger region" description="C2H2-type 12" evidence="1">
    <location>
        <begin position="449"/>
        <end position="471"/>
    </location>
</feature>
<feature type="cross-link" description="Glycyl lysine isopeptide (Lys-Gly) (interchain with G-Cter in SUMO2)" evidence="5">
    <location>
        <position position="273"/>
    </location>
</feature>
<feature type="cross-link" description="Glycyl lysine isopeptide (Lys-Gly) (interchain with G-Cter in SUMO2)" evidence="5">
    <location>
        <position position="424"/>
    </location>
</feature>
<feature type="splice variant" id="VSP_055964" description="In isoform 2." evidence="3">
    <location>
        <begin position="1"/>
        <end position="136"/>
    </location>
</feature>
<organism>
    <name type="scientific">Homo sapiens</name>
    <name type="common">Human</name>
    <dbReference type="NCBI Taxonomy" id="9606"/>
    <lineage>
        <taxon>Eukaryota</taxon>
        <taxon>Metazoa</taxon>
        <taxon>Chordata</taxon>
        <taxon>Craniata</taxon>
        <taxon>Vertebrata</taxon>
        <taxon>Euteleostomi</taxon>
        <taxon>Mammalia</taxon>
        <taxon>Eutheria</taxon>
        <taxon>Euarchontoglires</taxon>
        <taxon>Primates</taxon>
        <taxon>Haplorrhini</taxon>
        <taxon>Catarrhini</taxon>
        <taxon>Hominidae</taxon>
        <taxon>Homo</taxon>
    </lineage>
</organism>
<dbReference type="EMBL" id="AK304383">
    <property type="protein sequence ID" value="BAG65220.1"/>
    <property type="molecule type" value="mRNA"/>
</dbReference>
<dbReference type="EMBL" id="AC008759">
    <property type="status" value="NOT_ANNOTATED_CDS"/>
    <property type="molecule type" value="Genomic_DNA"/>
</dbReference>
<dbReference type="EMBL" id="BC012144">
    <property type="protein sequence ID" value="AAH12144.1"/>
    <property type="status" value="ALT_SEQ"/>
    <property type="molecule type" value="mRNA"/>
</dbReference>
<dbReference type="EMBL" id="BC032668">
    <property type="protein sequence ID" value="AAH32668.1"/>
    <property type="status" value="ALT_INIT"/>
    <property type="molecule type" value="mRNA"/>
</dbReference>
<dbReference type="CCDS" id="CCDS12216.2">
    <molecule id="Q8N587-1"/>
</dbReference>
<dbReference type="RefSeq" id="NP_001317294.1">
    <property type="nucleotide sequence ID" value="NM_001330365.1"/>
</dbReference>
<dbReference type="RefSeq" id="NP_689502.2">
    <molecule id="Q8N587-1"/>
    <property type="nucleotide sequence ID" value="NM_152289.3"/>
</dbReference>
<dbReference type="RefSeq" id="XP_005260207.1">
    <molecule id="Q8N587-1"/>
    <property type="nucleotide sequence ID" value="XM_005260150.3"/>
</dbReference>
<dbReference type="RefSeq" id="XP_016882968.1">
    <property type="nucleotide sequence ID" value="XM_017027479.1"/>
</dbReference>
<dbReference type="RefSeq" id="XP_016882970.1">
    <property type="nucleotide sequence ID" value="XM_017027481.1"/>
</dbReference>
<dbReference type="RefSeq" id="XP_016882971.1">
    <property type="nucleotide sequence ID" value="XM_017027482.1"/>
</dbReference>
<dbReference type="RefSeq" id="XP_047295665.1">
    <molecule id="Q8N587-1"/>
    <property type="nucleotide sequence ID" value="XM_047439709.1"/>
</dbReference>
<dbReference type="RefSeq" id="XP_054178637.1">
    <molecule id="Q8N587-1"/>
    <property type="nucleotide sequence ID" value="XM_054322662.1"/>
</dbReference>
<dbReference type="RefSeq" id="XP_054178638.1">
    <molecule id="Q8N587-1"/>
    <property type="nucleotide sequence ID" value="XM_054322663.1"/>
</dbReference>
<dbReference type="SMR" id="Q8N587"/>
<dbReference type="BioGRID" id="125005">
    <property type="interactions" value="11"/>
</dbReference>
<dbReference type="FunCoup" id="Q8N587">
    <property type="interactions" value="123"/>
</dbReference>
<dbReference type="IntAct" id="Q8N587">
    <property type="interactions" value="14"/>
</dbReference>
<dbReference type="STRING" id="9606.ENSP00000303915"/>
<dbReference type="GlyGen" id="Q8N587">
    <property type="glycosylation" value="3 sites, 1 O-linked glycan (1 site)"/>
</dbReference>
<dbReference type="iPTMnet" id="Q8N587"/>
<dbReference type="PhosphoSitePlus" id="Q8N587"/>
<dbReference type="BioMuta" id="ZNF561"/>
<dbReference type="DMDM" id="82582592"/>
<dbReference type="jPOST" id="Q8N587"/>
<dbReference type="MassIVE" id="Q8N587"/>
<dbReference type="PaxDb" id="9606-ENSP00000303915"/>
<dbReference type="PeptideAtlas" id="Q8N587"/>
<dbReference type="ProteomicsDB" id="5846"/>
<dbReference type="ProteomicsDB" id="72021">
    <molecule id="Q8N587-1"/>
</dbReference>
<dbReference type="Antibodypedia" id="25053">
    <property type="antibodies" value="39 antibodies from 14 providers"/>
</dbReference>
<dbReference type="DNASU" id="93134"/>
<dbReference type="Ensembl" id="ENST00000302851.8">
    <molecule id="Q8N587-1"/>
    <property type="protein sequence ID" value="ENSP00000303915.3"/>
    <property type="gene ID" value="ENSG00000171469.11"/>
</dbReference>
<dbReference type="GeneID" id="93134"/>
<dbReference type="KEGG" id="hsa:93134"/>
<dbReference type="MANE-Select" id="ENST00000302851.8">
    <property type="protein sequence ID" value="ENSP00000303915.3"/>
    <property type="RefSeq nucleotide sequence ID" value="NM_152289.3"/>
    <property type="RefSeq protein sequence ID" value="NP_689502.2"/>
</dbReference>
<dbReference type="UCSC" id="uc002mlu.4">
    <molecule id="Q8N587-1"/>
    <property type="organism name" value="human"/>
</dbReference>
<dbReference type="AGR" id="HGNC:28684"/>
<dbReference type="CTD" id="93134"/>
<dbReference type="GeneCards" id="ZNF561"/>
<dbReference type="HGNC" id="HGNC:28684">
    <property type="gene designation" value="ZNF561"/>
</dbReference>
<dbReference type="HPA" id="ENSG00000171469">
    <property type="expression patterns" value="Low tissue specificity"/>
</dbReference>
<dbReference type="neXtProt" id="NX_Q8N587"/>
<dbReference type="OpenTargets" id="ENSG00000171469"/>
<dbReference type="PharmGKB" id="PA134935834"/>
<dbReference type="VEuPathDB" id="HostDB:ENSG00000171469"/>
<dbReference type="eggNOG" id="KOG1721">
    <property type="taxonomic scope" value="Eukaryota"/>
</dbReference>
<dbReference type="GeneTree" id="ENSGT00940000162984"/>
<dbReference type="InParanoid" id="Q8N587"/>
<dbReference type="OMA" id="DCGNAFF"/>
<dbReference type="OrthoDB" id="6077919at2759"/>
<dbReference type="PAN-GO" id="Q8N587">
    <property type="GO annotations" value="4 GO annotations based on evolutionary models"/>
</dbReference>
<dbReference type="PhylomeDB" id="Q8N587"/>
<dbReference type="TreeFam" id="TF341966"/>
<dbReference type="PathwayCommons" id="Q8N587"/>
<dbReference type="Reactome" id="R-HSA-212436">
    <property type="pathway name" value="Generic Transcription Pathway"/>
</dbReference>
<dbReference type="SignaLink" id="Q8N587"/>
<dbReference type="BioGRID-ORCS" id="93134">
    <property type="hits" value="14 hits in 1142 CRISPR screens"/>
</dbReference>
<dbReference type="ChiTaRS" id="ZNF561">
    <property type="organism name" value="human"/>
</dbReference>
<dbReference type="GenomeRNAi" id="93134"/>
<dbReference type="Pharos" id="Q8N587">
    <property type="development level" value="Tdark"/>
</dbReference>
<dbReference type="PRO" id="PR:Q8N587"/>
<dbReference type="Proteomes" id="UP000005640">
    <property type="component" value="Chromosome 19"/>
</dbReference>
<dbReference type="RNAct" id="Q8N587">
    <property type="molecule type" value="protein"/>
</dbReference>
<dbReference type="Bgee" id="ENSG00000171469">
    <property type="expression patterns" value="Expressed in buccal mucosa cell and 187 other cell types or tissues"/>
</dbReference>
<dbReference type="ExpressionAtlas" id="Q8N587">
    <property type="expression patterns" value="baseline and differential"/>
</dbReference>
<dbReference type="GO" id="GO:0005634">
    <property type="term" value="C:nucleus"/>
    <property type="evidence" value="ECO:0000318"/>
    <property type="project" value="GO_Central"/>
</dbReference>
<dbReference type="GO" id="GO:0000981">
    <property type="term" value="F:DNA-binding transcription factor activity, RNA polymerase II-specific"/>
    <property type="evidence" value="ECO:0000318"/>
    <property type="project" value="GO_Central"/>
</dbReference>
<dbReference type="GO" id="GO:0000978">
    <property type="term" value="F:RNA polymerase II cis-regulatory region sequence-specific DNA binding"/>
    <property type="evidence" value="ECO:0000318"/>
    <property type="project" value="GO_Central"/>
</dbReference>
<dbReference type="GO" id="GO:0008270">
    <property type="term" value="F:zinc ion binding"/>
    <property type="evidence" value="ECO:0007669"/>
    <property type="project" value="UniProtKB-KW"/>
</dbReference>
<dbReference type="GO" id="GO:0006357">
    <property type="term" value="P:regulation of transcription by RNA polymerase II"/>
    <property type="evidence" value="ECO:0000318"/>
    <property type="project" value="GO_Central"/>
</dbReference>
<dbReference type="CDD" id="cd07765">
    <property type="entry name" value="KRAB_A-box"/>
    <property type="match status" value="1"/>
</dbReference>
<dbReference type="FunFam" id="3.30.160.60:FF:000184">
    <property type="entry name" value="Zinc finger protein 333"/>
    <property type="match status" value="1"/>
</dbReference>
<dbReference type="FunFam" id="3.30.160.60:FF:000338">
    <property type="entry name" value="zinc finger protein 383"/>
    <property type="match status" value="1"/>
</dbReference>
<dbReference type="FunFam" id="3.30.160.60:FF:002254">
    <property type="entry name" value="Zinc finger protein 540"/>
    <property type="match status" value="1"/>
</dbReference>
<dbReference type="FunFam" id="3.30.160.60:FF:001945">
    <property type="entry name" value="Zinc finger protein 559"/>
    <property type="match status" value="1"/>
</dbReference>
<dbReference type="FunFam" id="3.30.160.60:FF:003432">
    <property type="entry name" value="Zinc finger protein 561"/>
    <property type="match status" value="1"/>
</dbReference>
<dbReference type="FunFam" id="3.30.160.60:FF:001116">
    <property type="entry name" value="Zinc finger protein 562"/>
    <property type="match status" value="2"/>
</dbReference>
<dbReference type="FunFam" id="3.30.160.60:FF:001157">
    <property type="entry name" value="Zinc finger protein 793"/>
    <property type="match status" value="1"/>
</dbReference>
<dbReference type="Gene3D" id="6.10.140.140">
    <property type="match status" value="1"/>
</dbReference>
<dbReference type="Gene3D" id="3.30.160.60">
    <property type="entry name" value="Classic Zinc Finger"/>
    <property type="match status" value="9"/>
</dbReference>
<dbReference type="InterPro" id="IPR001909">
    <property type="entry name" value="KRAB"/>
</dbReference>
<dbReference type="InterPro" id="IPR036051">
    <property type="entry name" value="KRAB_dom_sf"/>
</dbReference>
<dbReference type="InterPro" id="IPR036236">
    <property type="entry name" value="Znf_C2H2_sf"/>
</dbReference>
<dbReference type="InterPro" id="IPR013087">
    <property type="entry name" value="Znf_C2H2_type"/>
</dbReference>
<dbReference type="PANTHER" id="PTHR24408">
    <property type="entry name" value="ZINC FINGER PROTEIN"/>
    <property type="match status" value="1"/>
</dbReference>
<dbReference type="PANTHER" id="PTHR24408:SF34">
    <property type="entry name" value="ZINC FINGER PROTEIN 672-RELATED"/>
    <property type="match status" value="1"/>
</dbReference>
<dbReference type="Pfam" id="PF01352">
    <property type="entry name" value="KRAB"/>
    <property type="match status" value="1"/>
</dbReference>
<dbReference type="Pfam" id="PF00096">
    <property type="entry name" value="zf-C2H2"/>
    <property type="match status" value="8"/>
</dbReference>
<dbReference type="SMART" id="SM00349">
    <property type="entry name" value="KRAB"/>
    <property type="match status" value="1"/>
</dbReference>
<dbReference type="SMART" id="SM00355">
    <property type="entry name" value="ZnF_C2H2"/>
    <property type="match status" value="9"/>
</dbReference>
<dbReference type="SUPFAM" id="SSF57667">
    <property type="entry name" value="beta-beta-alpha zinc fingers"/>
    <property type="match status" value="6"/>
</dbReference>
<dbReference type="SUPFAM" id="SSF109640">
    <property type="entry name" value="KRAB domain (Kruppel-associated box)"/>
    <property type="match status" value="1"/>
</dbReference>
<dbReference type="PROSITE" id="PS50805">
    <property type="entry name" value="KRAB"/>
    <property type="match status" value="1"/>
</dbReference>
<dbReference type="PROSITE" id="PS00028">
    <property type="entry name" value="ZINC_FINGER_C2H2_1"/>
    <property type="match status" value="8"/>
</dbReference>
<dbReference type="PROSITE" id="PS50157">
    <property type="entry name" value="ZINC_FINGER_C2H2_2"/>
    <property type="match status" value="10"/>
</dbReference>
<proteinExistence type="evidence at protein level"/>
<gene>
    <name type="primary">ZNF561</name>
</gene>
<keyword id="KW-0025">Alternative splicing</keyword>
<keyword id="KW-0238">DNA-binding</keyword>
<keyword id="KW-1017">Isopeptide bond</keyword>
<keyword id="KW-0479">Metal-binding</keyword>
<keyword id="KW-0539">Nucleus</keyword>
<keyword id="KW-1267">Proteomics identification</keyword>
<keyword id="KW-1185">Reference proteome</keyword>
<keyword id="KW-0677">Repeat</keyword>
<keyword id="KW-0804">Transcription</keyword>
<keyword id="KW-0805">Transcription regulation</keyword>
<keyword id="KW-0832">Ubl conjugation</keyword>
<keyword id="KW-0862">Zinc</keyword>
<keyword id="KW-0863">Zinc-finger</keyword>
<name>ZN561_HUMAN</name>
<reference key="1">
    <citation type="journal article" date="2004" name="Nat. Genet.">
        <title>Complete sequencing and characterization of 21,243 full-length human cDNAs.</title>
        <authorList>
            <person name="Ota T."/>
            <person name="Suzuki Y."/>
            <person name="Nishikawa T."/>
            <person name="Otsuki T."/>
            <person name="Sugiyama T."/>
            <person name="Irie R."/>
            <person name="Wakamatsu A."/>
            <person name="Hayashi K."/>
            <person name="Sato H."/>
            <person name="Nagai K."/>
            <person name="Kimura K."/>
            <person name="Makita H."/>
            <person name="Sekine M."/>
            <person name="Obayashi M."/>
            <person name="Nishi T."/>
            <person name="Shibahara T."/>
            <person name="Tanaka T."/>
            <person name="Ishii S."/>
            <person name="Yamamoto J."/>
            <person name="Saito K."/>
            <person name="Kawai Y."/>
            <person name="Isono Y."/>
            <person name="Nakamura Y."/>
            <person name="Nagahari K."/>
            <person name="Murakami K."/>
            <person name="Yasuda T."/>
            <person name="Iwayanagi T."/>
            <person name="Wagatsuma M."/>
            <person name="Shiratori A."/>
            <person name="Sudo H."/>
            <person name="Hosoiri T."/>
            <person name="Kaku Y."/>
            <person name="Kodaira H."/>
            <person name="Kondo H."/>
            <person name="Sugawara M."/>
            <person name="Takahashi M."/>
            <person name="Kanda K."/>
            <person name="Yokoi T."/>
            <person name="Furuya T."/>
            <person name="Kikkawa E."/>
            <person name="Omura Y."/>
            <person name="Abe K."/>
            <person name="Kamihara K."/>
            <person name="Katsuta N."/>
            <person name="Sato K."/>
            <person name="Tanikawa M."/>
            <person name="Yamazaki M."/>
            <person name="Ninomiya K."/>
            <person name="Ishibashi T."/>
            <person name="Yamashita H."/>
            <person name="Murakawa K."/>
            <person name="Fujimori K."/>
            <person name="Tanai H."/>
            <person name="Kimata M."/>
            <person name="Watanabe M."/>
            <person name="Hiraoka S."/>
            <person name="Chiba Y."/>
            <person name="Ishida S."/>
            <person name="Ono Y."/>
            <person name="Takiguchi S."/>
            <person name="Watanabe S."/>
            <person name="Yosida M."/>
            <person name="Hotuta T."/>
            <person name="Kusano J."/>
            <person name="Kanehori K."/>
            <person name="Takahashi-Fujii A."/>
            <person name="Hara H."/>
            <person name="Tanase T.-O."/>
            <person name="Nomura Y."/>
            <person name="Togiya S."/>
            <person name="Komai F."/>
            <person name="Hara R."/>
            <person name="Takeuchi K."/>
            <person name="Arita M."/>
            <person name="Imose N."/>
            <person name="Musashino K."/>
            <person name="Yuuki H."/>
            <person name="Oshima A."/>
            <person name="Sasaki N."/>
            <person name="Aotsuka S."/>
            <person name="Yoshikawa Y."/>
            <person name="Matsunawa H."/>
            <person name="Ichihara T."/>
            <person name="Shiohata N."/>
            <person name="Sano S."/>
            <person name="Moriya S."/>
            <person name="Momiyama H."/>
            <person name="Satoh N."/>
            <person name="Takami S."/>
            <person name="Terashima Y."/>
            <person name="Suzuki O."/>
            <person name="Nakagawa S."/>
            <person name="Senoh A."/>
            <person name="Mizoguchi H."/>
            <person name="Goto Y."/>
            <person name="Shimizu F."/>
            <person name="Wakebe H."/>
            <person name="Hishigaki H."/>
            <person name="Watanabe T."/>
            <person name="Sugiyama A."/>
            <person name="Takemoto M."/>
            <person name="Kawakami B."/>
            <person name="Yamazaki M."/>
            <person name="Watanabe K."/>
            <person name="Kumagai A."/>
            <person name="Itakura S."/>
            <person name="Fukuzumi Y."/>
            <person name="Fujimori Y."/>
            <person name="Komiyama M."/>
            <person name="Tashiro H."/>
            <person name="Tanigami A."/>
            <person name="Fujiwara T."/>
            <person name="Ono T."/>
            <person name="Yamada K."/>
            <person name="Fujii Y."/>
            <person name="Ozaki K."/>
            <person name="Hirao M."/>
            <person name="Ohmori Y."/>
            <person name="Kawabata A."/>
            <person name="Hikiji T."/>
            <person name="Kobatake N."/>
            <person name="Inagaki H."/>
            <person name="Ikema Y."/>
            <person name="Okamoto S."/>
            <person name="Okitani R."/>
            <person name="Kawakami T."/>
            <person name="Noguchi S."/>
            <person name="Itoh T."/>
            <person name="Shigeta K."/>
            <person name="Senba T."/>
            <person name="Matsumura K."/>
            <person name="Nakajima Y."/>
            <person name="Mizuno T."/>
            <person name="Morinaga M."/>
            <person name="Sasaki M."/>
            <person name="Togashi T."/>
            <person name="Oyama M."/>
            <person name="Hata H."/>
            <person name="Watanabe M."/>
            <person name="Komatsu T."/>
            <person name="Mizushima-Sugano J."/>
            <person name="Satoh T."/>
            <person name="Shirai Y."/>
            <person name="Takahashi Y."/>
            <person name="Nakagawa K."/>
            <person name="Okumura K."/>
            <person name="Nagase T."/>
            <person name="Nomura N."/>
            <person name="Kikuchi H."/>
            <person name="Masuho Y."/>
            <person name="Yamashita R."/>
            <person name="Nakai K."/>
            <person name="Yada T."/>
            <person name="Nakamura Y."/>
            <person name="Ohara O."/>
            <person name="Isogai T."/>
            <person name="Sugano S."/>
        </authorList>
    </citation>
    <scope>NUCLEOTIDE SEQUENCE [LARGE SCALE MRNA] (ISOFORM 2)</scope>
    <source>
        <tissue>Trachea</tissue>
    </source>
</reference>
<reference key="2">
    <citation type="journal article" date="2004" name="Nature">
        <title>The DNA sequence and biology of human chromosome 19.</title>
        <authorList>
            <person name="Grimwood J."/>
            <person name="Gordon L.A."/>
            <person name="Olsen A.S."/>
            <person name="Terry A."/>
            <person name="Schmutz J."/>
            <person name="Lamerdin J.E."/>
            <person name="Hellsten U."/>
            <person name="Goodstein D."/>
            <person name="Couronne O."/>
            <person name="Tran-Gyamfi M."/>
            <person name="Aerts A."/>
            <person name="Altherr M."/>
            <person name="Ashworth L."/>
            <person name="Bajorek E."/>
            <person name="Black S."/>
            <person name="Branscomb E."/>
            <person name="Caenepeel S."/>
            <person name="Carrano A.V."/>
            <person name="Caoile C."/>
            <person name="Chan Y.M."/>
            <person name="Christensen M."/>
            <person name="Cleland C.A."/>
            <person name="Copeland A."/>
            <person name="Dalin E."/>
            <person name="Dehal P."/>
            <person name="Denys M."/>
            <person name="Detter J.C."/>
            <person name="Escobar J."/>
            <person name="Flowers D."/>
            <person name="Fotopulos D."/>
            <person name="Garcia C."/>
            <person name="Georgescu A.M."/>
            <person name="Glavina T."/>
            <person name="Gomez M."/>
            <person name="Gonzales E."/>
            <person name="Groza M."/>
            <person name="Hammon N."/>
            <person name="Hawkins T."/>
            <person name="Haydu L."/>
            <person name="Ho I."/>
            <person name="Huang W."/>
            <person name="Israni S."/>
            <person name="Jett J."/>
            <person name="Kadner K."/>
            <person name="Kimball H."/>
            <person name="Kobayashi A."/>
            <person name="Larionov V."/>
            <person name="Leem S.-H."/>
            <person name="Lopez F."/>
            <person name="Lou Y."/>
            <person name="Lowry S."/>
            <person name="Malfatti S."/>
            <person name="Martinez D."/>
            <person name="McCready P.M."/>
            <person name="Medina C."/>
            <person name="Morgan J."/>
            <person name="Nelson K."/>
            <person name="Nolan M."/>
            <person name="Ovcharenko I."/>
            <person name="Pitluck S."/>
            <person name="Pollard M."/>
            <person name="Popkie A.P."/>
            <person name="Predki P."/>
            <person name="Quan G."/>
            <person name="Ramirez L."/>
            <person name="Rash S."/>
            <person name="Retterer J."/>
            <person name="Rodriguez A."/>
            <person name="Rogers S."/>
            <person name="Salamov A."/>
            <person name="Salazar A."/>
            <person name="She X."/>
            <person name="Smith D."/>
            <person name="Slezak T."/>
            <person name="Solovyev V."/>
            <person name="Thayer N."/>
            <person name="Tice H."/>
            <person name="Tsai M."/>
            <person name="Ustaszewska A."/>
            <person name="Vo N."/>
            <person name="Wagner M."/>
            <person name="Wheeler J."/>
            <person name="Wu K."/>
            <person name="Xie G."/>
            <person name="Yang J."/>
            <person name="Dubchak I."/>
            <person name="Furey T.S."/>
            <person name="DeJong P."/>
            <person name="Dickson M."/>
            <person name="Gordon D."/>
            <person name="Eichler E.E."/>
            <person name="Pennacchio L.A."/>
            <person name="Richardson P."/>
            <person name="Stubbs L."/>
            <person name="Rokhsar D.S."/>
            <person name="Myers R.M."/>
            <person name="Rubin E.M."/>
            <person name="Lucas S.M."/>
        </authorList>
    </citation>
    <scope>NUCLEOTIDE SEQUENCE [LARGE SCALE GENOMIC DNA]</scope>
</reference>
<reference key="3">
    <citation type="journal article" date="2004" name="Genome Res.">
        <title>The status, quality, and expansion of the NIH full-length cDNA project: the Mammalian Gene Collection (MGC).</title>
        <authorList>
            <consortium name="The MGC Project Team"/>
        </authorList>
    </citation>
    <scope>NUCLEOTIDE SEQUENCE [LARGE SCALE MRNA] (ISOFORM 1)</scope>
    <source>
        <tissue>Colon</tissue>
        <tissue>Skin</tissue>
    </source>
</reference>
<reference key="4">
    <citation type="journal article" date="2017" name="Nat. Struct. Mol. Biol.">
        <title>Site-specific mapping of the human SUMO proteome reveals co-modification with phosphorylation.</title>
        <authorList>
            <person name="Hendriks I.A."/>
            <person name="Lyon D."/>
            <person name="Young C."/>
            <person name="Jensen L.J."/>
            <person name="Vertegaal A.C."/>
            <person name="Nielsen M.L."/>
        </authorList>
    </citation>
    <scope>SUMOYLATION [LARGE SCALE ANALYSIS] AT LYS-273 AND LYS-424</scope>
    <scope>IDENTIFICATION BY MASS SPECTROMETRY [LARGE SCALE ANALYSIS]</scope>
</reference>
<accession>Q8N587</accession>
<accession>B4E2Q8</accession>
<accession>Q6PJS0</accession>
<evidence type="ECO:0000255" key="1">
    <source>
        <dbReference type="PROSITE-ProRule" id="PRU00042"/>
    </source>
</evidence>
<evidence type="ECO:0000255" key="2">
    <source>
        <dbReference type="PROSITE-ProRule" id="PRU00119"/>
    </source>
</evidence>
<evidence type="ECO:0000303" key="3">
    <source>
    </source>
</evidence>
<evidence type="ECO:0000305" key="4"/>
<evidence type="ECO:0007744" key="5">
    <source>
    </source>
</evidence>
<protein>
    <recommendedName>
        <fullName>Zinc finger protein 561</fullName>
    </recommendedName>
</protein>
<sequence>MAAIYLSRGFFSREPICPFEEKTKVERMVEDYLASGYQDSVTFDDVAVDFTPEEWALLDTTEKYLYRDVMLENYMNLASVEWEIQPRTKRSSLQQGFLKNQIFSGIQMTRGYSGWKLCDCKNCGEVFREQFCLKTHMRVQNGGNTSEGNCYGKDTLSVHKEASTGQELSKFNPCGKVFTLTPGLAVHLEVLNARQPYKCKECGKGFKYFASLDNHMGIHTDEKLCEFQEYGRAVTASSHLKQCVAVHTGKKSKKTKKCGKSFTNFSQLYAPVKTHKGEKSFECKECGRSFRNSSCLNDHIQIHTGIKPHKCTYCGKAFTRSTQLTEHVRTHTGIKPYECKECGQAFAQYSGLSIHIRSHSGKKPYQCKECGKAFTTSTSLIQHTRIHTGEKPYECVECGKTFITSSRRSKHLKTHSGEKPFVCKICGKAFLYSSRLNVHLRTHTGEKPFVCKECGKAFAVSSRLSRHERIHTGEKPYECKDMSVTI</sequence>
<comment type="function">
    <text>May be involved in transcriptional regulation.</text>
</comment>
<comment type="subcellular location">
    <subcellularLocation>
        <location evidence="4">Nucleus</location>
    </subcellularLocation>
</comment>
<comment type="alternative products">
    <event type="alternative splicing"/>
    <isoform>
        <id>Q8N587-1</id>
        <name>1</name>
        <sequence type="displayed"/>
    </isoform>
    <isoform>
        <id>Q8N587-2</id>
        <name>2</name>
        <sequence type="described" ref="VSP_055964"/>
    </isoform>
</comment>
<comment type="similarity">
    <text evidence="4">Belongs to the krueppel C2H2-type zinc-finger protein family.</text>
</comment>
<comment type="sequence caution" evidence="4">
    <conflict type="miscellaneous discrepancy">
        <sequence resource="EMBL-CDS" id="AAH12144"/>
    </conflict>
    <text>Contaminating sequence. Potential poly-A sequence.</text>
</comment>
<comment type="sequence caution" evidence="4">
    <conflict type="erroneous initiation">
        <sequence resource="EMBL-CDS" id="AAH32668"/>
    </conflict>
</comment>